<evidence type="ECO:0000255" key="1">
    <source>
        <dbReference type="HAMAP-Rule" id="MF_01309"/>
    </source>
</evidence>
<evidence type="ECO:0000305" key="2"/>
<gene>
    <name evidence="1" type="primary">rpsC</name>
    <name type="ordered locus">SFV_3334</name>
</gene>
<proteinExistence type="inferred from homology"/>
<keyword id="KW-0687">Ribonucleoprotein</keyword>
<keyword id="KW-0689">Ribosomal protein</keyword>
<keyword id="KW-0694">RNA-binding</keyword>
<keyword id="KW-0699">rRNA-binding</keyword>
<organism>
    <name type="scientific">Shigella flexneri serotype 5b (strain 8401)</name>
    <dbReference type="NCBI Taxonomy" id="373384"/>
    <lineage>
        <taxon>Bacteria</taxon>
        <taxon>Pseudomonadati</taxon>
        <taxon>Pseudomonadota</taxon>
        <taxon>Gammaproteobacteria</taxon>
        <taxon>Enterobacterales</taxon>
        <taxon>Enterobacteriaceae</taxon>
        <taxon>Shigella</taxon>
    </lineage>
</organism>
<name>RS3_SHIF8</name>
<feature type="chain" id="PRO_0000293886" description="Small ribosomal subunit protein uS3">
    <location>
        <begin position="1"/>
        <end position="233"/>
    </location>
</feature>
<feature type="domain" description="KH type-2" evidence="1">
    <location>
        <begin position="39"/>
        <end position="107"/>
    </location>
</feature>
<comment type="function">
    <text evidence="1">Binds the lower part of the 30S subunit head. Binds mRNA in the 70S ribosome, positioning it for translation.</text>
</comment>
<comment type="subunit">
    <text evidence="1">Part of the 30S ribosomal subunit. Forms a tight complex with proteins S10 and S14.</text>
</comment>
<comment type="similarity">
    <text evidence="1">Belongs to the universal ribosomal protein uS3 family.</text>
</comment>
<protein>
    <recommendedName>
        <fullName evidence="1">Small ribosomal subunit protein uS3</fullName>
    </recommendedName>
    <alternativeName>
        <fullName evidence="2">30S ribosomal protein S3</fullName>
    </alternativeName>
</protein>
<dbReference type="EMBL" id="CP000266">
    <property type="protein sequence ID" value="ABF05377.1"/>
    <property type="molecule type" value="Genomic_DNA"/>
</dbReference>
<dbReference type="RefSeq" id="WP_000529945.1">
    <property type="nucleotide sequence ID" value="NC_008258.1"/>
</dbReference>
<dbReference type="SMR" id="Q0SZY8"/>
<dbReference type="GeneID" id="97603663"/>
<dbReference type="KEGG" id="sfv:SFV_3334"/>
<dbReference type="HOGENOM" id="CLU_058591_0_2_6"/>
<dbReference type="Proteomes" id="UP000000659">
    <property type="component" value="Chromosome"/>
</dbReference>
<dbReference type="GO" id="GO:0022627">
    <property type="term" value="C:cytosolic small ribosomal subunit"/>
    <property type="evidence" value="ECO:0007669"/>
    <property type="project" value="TreeGrafter"/>
</dbReference>
<dbReference type="GO" id="GO:0003729">
    <property type="term" value="F:mRNA binding"/>
    <property type="evidence" value="ECO:0007669"/>
    <property type="project" value="UniProtKB-UniRule"/>
</dbReference>
<dbReference type="GO" id="GO:0019843">
    <property type="term" value="F:rRNA binding"/>
    <property type="evidence" value="ECO:0007669"/>
    <property type="project" value="UniProtKB-UniRule"/>
</dbReference>
<dbReference type="GO" id="GO:0003735">
    <property type="term" value="F:structural constituent of ribosome"/>
    <property type="evidence" value="ECO:0007669"/>
    <property type="project" value="InterPro"/>
</dbReference>
<dbReference type="GO" id="GO:0006412">
    <property type="term" value="P:translation"/>
    <property type="evidence" value="ECO:0007669"/>
    <property type="project" value="UniProtKB-UniRule"/>
</dbReference>
<dbReference type="CDD" id="cd02412">
    <property type="entry name" value="KH-II_30S_S3"/>
    <property type="match status" value="1"/>
</dbReference>
<dbReference type="FunFam" id="3.30.1140.32:FF:000001">
    <property type="entry name" value="30S ribosomal protein S3"/>
    <property type="match status" value="1"/>
</dbReference>
<dbReference type="FunFam" id="3.30.300.20:FF:000001">
    <property type="entry name" value="30S ribosomal protein S3"/>
    <property type="match status" value="1"/>
</dbReference>
<dbReference type="Gene3D" id="3.30.300.20">
    <property type="match status" value="1"/>
</dbReference>
<dbReference type="Gene3D" id="3.30.1140.32">
    <property type="entry name" value="Ribosomal protein S3, C-terminal domain"/>
    <property type="match status" value="1"/>
</dbReference>
<dbReference type="HAMAP" id="MF_01309_B">
    <property type="entry name" value="Ribosomal_uS3_B"/>
    <property type="match status" value="1"/>
</dbReference>
<dbReference type="InterPro" id="IPR004087">
    <property type="entry name" value="KH_dom"/>
</dbReference>
<dbReference type="InterPro" id="IPR015946">
    <property type="entry name" value="KH_dom-like_a/b"/>
</dbReference>
<dbReference type="InterPro" id="IPR004044">
    <property type="entry name" value="KH_dom_type_2"/>
</dbReference>
<dbReference type="InterPro" id="IPR009019">
    <property type="entry name" value="KH_sf_prok-type"/>
</dbReference>
<dbReference type="InterPro" id="IPR036419">
    <property type="entry name" value="Ribosomal_S3_C_sf"/>
</dbReference>
<dbReference type="InterPro" id="IPR005704">
    <property type="entry name" value="Ribosomal_uS3_bac-typ"/>
</dbReference>
<dbReference type="InterPro" id="IPR001351">
    <property type="entry name" value="Ribosomal_uS3_C"/>
</dbReference>
<dbReference type="InterPro" id="IPR018280">
    <property type="entry name" value="Ribosomal_uS3_CS"/>
</dbReference>
<dbReference type="NCBIfam" id="TIGR01009">
    <property type="entry name" value="rpsC_bact"/>
    <property type="match status" value="1"/>
</dbReference>
<dbReference type="PANTHER" id="PTHR11760">
    <property type="entry name" value="30S/40S RIBOSOMAL PROTEIN S3"/>
    <property type="match status" value="1"/>
</dbReference>
<dbReference type="PANTHER" id="PTHR11760:SF19">
    <property type="entry name" value="SMALL RIBOSOMAL SUBUNIT PROTEIN US3C"/>
    <property type="match status" value="1"/>
</dbReference>
<dbReference type="Pfam" id="PF07650">
    <property type="entry name" value="KH_2"/>
    <property type="match status" value="1"/>
</dbReference>
<dbReference type="Pfam" id="PF00189">
    <property type="entry name" value="Ribosomal_S3_C"/>
    <property type="match status" value="1"/>
</dbReference>
<dbReference type="SMART" id="SM00322">
    <property type="entry name" value="KH"/>
    <property type="match status" value="1"/>
</dbReference>
<dbReference type="SUPFAM" id="SSF54814">
    <property type="entry name" value="Prokaryotic type KH domain (KH-domain type II)"/>
    <property type="match status" value="1"/>
</dbReference>
<dbReference type="SUPFAM" id="SSF54821">
    <property type="entry name" value="Ribosomal protein S3 C-terminal domain"/>
    <property type="match status" value="1"/>
</dbReference>
<dbReference type="PROSITE" id="PS50823">
    <property type="entry name" value="KH_TYPE_2"/>
    <property type="match status" value="1"/>
</dbReference>
<dbReference type="PROSITE" id="PS00548">
    <property type="entry name" value="RIBOSOMAL_S3"/>
    <property type="match status" value="1"/>
</dbReference>
<sequence length="233" mass="25983">MGQKVHPNGIRLGIVKPWNSTWFANTKEFADNLDSDFKVRQYLTKELAKASVSRIVIERPAKSIRVTIHTARPGIVIGKKGEDVEKLRKVVADIAGVPAQINIAEVRKPELDAKLVADSITSQLERRVMFRRAMKRAVQNAMRLGAKGIKVEVSGRLGGAEIARTEWYREGRVPLHTLRADIDYNTSEAHTTYGVIGVKVWIFKGEILGGMAAVEQPEKPAAQPKKQQRKGRK</sequence>
<reference key="1">
    <citation type="journal article" date="2006" name="BMC Genomics">
        <title>Complete genome sequence of Shigella flexneri 5b and comparison with Shigella flexneri 2a.</title>
        <authorList>
            <person name="Nie H."/>
            <person name="Yang F."/>
            <person name="Zhang X."/>
            <person name="Yang J."/>
            <person name="Chen L."/>
            <person name="Wang J."/>
            <person name="Xiong Z."/>
            <person name="Peng J."/>
            <person name="Sun L."/>
            <person name="Dong J."/>
            <person name="Xue Y."/>
            <person name="Xu X."/>
            <person name="Chen S."/>
            <person name="Yao Z."/>
            <person name="Shen Y."/>
            <person name="Jin Q."/>
        </authorList>
    </citation>
    <scope>NUCLEOTIDE SEQUENCE [LARGE SCALE GENOMIC DNA]</scope>
    <source>
        <strain>8401</strain>
    </source>
</reference>
<accession>Q0SZY8</accession>